<reference key="1">
    <citation type="submission" date="2007-06" db="EMBL/GenBank/DDBJ databases">
        <title>Complete sequence of Sinorhizobium medicae WSM419 chromosome.</title>
        <authorList>
            <consortium name="US DOE Joint Genome Institute"/>
            <person name="Copeland A."/>
            <person name="Lucas S."/>
            <person name="Lapidus A."/>
            <person name="Barry K."/>
            <person name="Glavina del Rio T."/>
            <person name="Dalin E."/>
            <person name="Tice H."/>
            <person name="Pitluck S."/>
            <person name="Chain P."/>
            <person name="Malfatti S."/>
            <person name="Shin M."/>
            <person name="Vergez L."/>
            <person name="Schmutz J."/>
            <person name="Larimer F."/>
            <person name="Land M."/>
            <person name="Hauser L."/>
            <person name="Kyrpides N."/>
            <person name="Mikhailova N."/>
            <person name="Reeve W.G."/>
            <person name="Richardson P."/>
        </authorList>
    </citation>
    <scope>NUCLEOTIDE SEQUENCE [LARGE SCALE GENOMIC DNA]</scope>
    <source>
        <strain>WSM419</strain>
    </source>
</reference>
<sequence length="101" mass="10900">MIPGEIITAAGEIELNAGLETVTIEVANSGDRPVQVGSHYHFAEANPGLLFDRDAARGKRLDIPAGTAVRFEPGQTRQVTLIPLSGKREVFGFRQQVMGKL</sequence>
<protein>
    <recommendedName>
        <fullName evidence="1">Urease subunit beta</fullName>
        <ecNumber evidence="1">3.5.1.5</ecNumber>
    </recommendedName>
    <alternativeName>
        <fullName evidence="1">Urea amidohydrolase subunit beta</fullName>
    </alternativeName>
</protein>
<gene>
    <name evidence="1" type="primary">ureB</name>
    <name type="ordered locus">Smed_2386</name>
</gene>
<name>URE2_SINMW</name>
<accession>A6UC38</accession>
<comment type="catalytic activity">
    <reaction evidence="1">
        <text>urea + 2 H2O + H(+) = hydrogencarbonate + 2 NH4(+)</text>
        <dbReference type="Rhea" id="RHEA:20557"/>
        <dbReference type="ChEBI" id="CHEBI:15377"/>
        <dbReference type="ChEBI" id="CHEBI:15378"/>
        <dbReference type="ChEBI" id="CHEBI:16199"/>
        <dbReference type="ChEBI" id="CHEBI:17544"/>
        <dbReference type="ChEBI" id="CHEBI:28938"/>
        <dbReference type="EC" id="3.5.1.5"/>
    </reaction>
</comment>
<comment type="pathway">
    <text evidence="1">Nitrogen metabolism; urea degradation; CO(2) and NH(3) from urea (urease route): step 1/1.</text>
</comment>
<comment type="subunit">
    <text evidence="1">Heterotrimer of UreA (gamma), UreB (beta) and UreC (alpha) subunits. Three heterotrimers associate to form the active enzyme.</text>
</comment>
<comment type="subcellular location">
    <subcellularLocation>
        <location evidence="1">Cytoplasm</location>
    </subcellularLocation>
</comment>
<comment type="similarity">
    <text evidence="1">Belongs to the urease beta subunit family.</text>
</comment>
<proteinExistence type="inferred from homology"/>
<dbReference type="EC" id="3.5.1.5" evidence="1"/>
<dbReference type="EMBL" id="CP000738">
    <property type="protein sequence ID" value="ABR61218.1"/>
    <property type="molecule type" value="Genomic_DNA"/>
</dbReference>
<dbReference type="RefSeq" id="WP_012066609.1">
    <property type="nucleotide sequence ID" value="NC_009636.1"/>
</dbReference>
<dbReference type="RefSeq" id="YP_001328053.1">
    <property type="nucleotide sequence ID" value="NC_009636.1"/>
</dbReference>
<dbReference type="SMR" id="A6UC38"/>
<dbReference type="STRING" id="366394.Smed_2386"/>
<dbReference type="KEGG" id="smd:Smed_2386"/>
<dbReference type="PATRIC" id="fig|366394.8.peg.5569"/>
<dbReference type="eggNOG" id="COG0832">
    <property type="taxonomic scope" value="Bacteria"/>
</dbReference>
<dbReference type="HOGENOM" id="CLU_129707_1_1_5"/>
<dbReference type="OrthoDB" id="9797217at2"/>
<dbReference type="UniPathway" id="UPA00258">
    <property type="reaction ID" value="UER00370"/>
</dbReference>
<dbReference type="Proteomes" id="UP000001108">
    <property type="component" value="Chromosome"/>
</dbReference>
<dbReference type="GO" id="GO:0035550">
    <property type="term" value="C:urease complex"/>
    <property type="evidence" value="ECO:0007669"/>
    <property type="project" value="InterPro"/>
</dbReference>
<dbReference type="GO" id="GO:0009039">
    <property type="term" value="F:urease activity"/>
    <property type="evidence" value="ECO:0007669"/>
    <property type="project" value="UniProtKB-UniRule"/>
</dbReference>
<dbReference type="GO" id="GO:0043419">
    <property type="term" value="P:urea catabolic process"/>
    <property type="evidence" value="ECO:0007669"/>
    <property type="project" value="UniProtKB-UniRule"/>
</dbReference>
<dbReference type="CDD" id="cd00407">
    <property type="entry name" value="Urease_beta"/>
    <property type="match status" value="1"/>
</dbReference>
<dbReference type="FunFam" id="2.10.150.10:FF:000001">
    <property type="entry name" value="Urease subunit beta"/>
    <property type="match status" value="1"/>
</dbReference>
<dbReference type="Gene3D" id="2.10.150.10">
    <property type="entry name" value="Urease, beta subunit"/>
    <property type="match status" value="1"/>
</dbReference>
<dbReference type="HAMAP" id="MF_01954">
    <property type="entry name" value="Urease_beta"/>
    <property type="match status" value="1"/>
</dbReference>
<dbReference type="InterPro" id="IPR002019">
    <property type="entry name" value="Urease_beta-like"/>
</dbReference>
<dbReference type="InterPro" id="IPR036461">
    <property type="entry name" value="Urease_betasu_sf"/>
</dbReference>
<dbReference type="InterPro" id="IPR050069">
    <property type="entry name" value="Urease_subunit"/>
</dbReference>
<dbReference type="NCBIfam" id="NF009682">
    <property type="entry name" value="PRK13203.1"/>
    <property type="match status" value="1"/>
</dbReference>
<dbReference type="NCBIfam" id="TIGR00192">
    <property type="entry name" value="urease_beta"/>
    <property type="match status" value="1"/>
</dbReference>
<dbReference type="PANTHER" id="PTHR33569">
    <property type="entry name" value="UREASE"/>
    <property type="match status" value="1"/>
</dbReference>
<dbReference type="PANTHER" id="PTHR33569:SF1">
    <property type="entry name" value="UREASE"/>
    <property type="match status" value="1"/>
</dbReference>
<dbReference type="Pfam" id="PF00699">
    <property type="entry name" value="Urease_beta"/>
    <property type="match status" value="1"/>
</dbReference>
<dbReference type="SUPFAM" id="SSF51278">
    <property type="entry name" value="Urease, beta-subunit"/>
    <property type="match status" value="1"/>
</dbReference>
<evidence type="ECO:0000255" key="1">
    <source>
        <dbReference type="HAMAP-Rule" id="MF_01954"/>
    </source>
</evidence>
<keyword id="KW-0963">Cytoplasm</keyword>
<keyword id="KW-0378">Hydrolase</keyword>
<feature type="chain" id="PRO_1000070775" description="Urease subunit beta">
    <location>
        <begin position="1"/>
        <end position="101"/>
    </location>
</feature>
<organism>
    <name type="scientific">Sinorhizobium medicae (strain WSM419)</name>
    <name type="common">Ensifer medicae</name>
    <dbReference type="NCBI Taxonomy" id="366394"/>
    <lineage>
        <taxon>Bacteria</taxon>
        <taxon>Pseudomonadati</taxon>
        <taxon>Pseudomonadota</taxon>
        <taxon>Alphaproteobacteria</taxon>
        <taxon>Hyphomicrobiales</taxon>
        <taxon>Rhizobiaceae</taxon>
        <taxon>Sinorhizobium/Ensifer group</taxon>
        <taxon>Sinorhizobium</taxon>
    </lineage>
</organism>